<gene>
    <name evidence="1" type="primary">rsmG</name>
    <name type="ordered locus">P9301_16651</name>
</gene>
<comment type="function">
    <text evidence="1">Specifically methylates the N7 position of a guanine in 16S rRNA.</text>
</comment>
<comment type="subcellular location">
    <subcellularLocation>
        <location evidence="1">Cytoplasm</location>
    </subcellularLocation>
</comment>
<comment type="similarity">
    <text evidence="1">Belongs to the methyltransferase superfamily. RNA methyltransferase RsmG family.</text>
</comment>
<feature type="chain" id="PRO_1000010179" description="Ribosomal RNA small subunit methyltransferase G">
    <location>
        <begin position="1"/>
        <end position="237"/>
    </location>
</feature>
<feature type="binding site" evidence="1">
    <location>
        <position position="76"/>
    </location>
    <ligand>
        <name>S-adenosyl-L-methionine</name>
        <dbReference type="ChEBI" id="CHEBI:59789"/>
    </ligand>
</feature>
<feature type="binding site" evidence="1">
    <location>
        <position position="81"/>
    </location>
    <ligand>
        <name>S-adenosyl-L-methionine</name>
        <dbReference type="ChEBI" id="CHEBI:59789"/>
    </ligand>
</feature>
<feature type="binding site" evidence="1">
    <location>
        <begin position="128"/>
        <end position="129"/>
    </location>
    <ligand>
        <name>S-adenosyl-L-methionine</name>
        <dbReference type="ChEBI" id="CHEBI:59789"/>
    </ligand>
</feature>
<feature type="binding site" evidence="1">
    <location>
        <position position="147"/>
    </location>
    <ligand>
        <name>S-adenosyl-L-methionine</name>
        <dbReference type="ChEBI" id="CHEBI:59789"/>
    </ligand>
</feature>
<proteinExistence type="inferred from homology"/>
<evidence type="ECO:0000255" key="1">
    <source>
        <dbReference type="HAMAP-Rule" id="MF_00074"/>
    </source>
</evidence>
<protein>
    <recommendedName>
        <fullName evidence="1">Ribosomal RNA small subunit methyltransferase G</fullName>
        <ecNumber evidence="1">2.1.1.-</ecNumber>
    </recommendedName>
    <alternativeName>
        <fullName evidence="1">16S rRNA 7-methylguanosine methyltransferase</fullName>
        <shortName evidence="1">16S rRNA m7G methyltransferase</shortName>
    </alternativeName>
</protein>
<organism>
    <name type="scientific">Prochlorococcus marinus (strain MIT 9301)</name>
    <dbReference type="NCBI Taxonomy" id="167546"/>
    <lineage>
        <taxon>Bacteria</taxon>
        <taxon>Bacillati</taxon>
        <taxon>Cyanobacteriota</taxon>
        <taxon>Cyanophyceae</taxon>
        <taxon>Synechococcales</taxon>
        <taxon>Prochlorococcaceae</taxon>
        <taxon>Prochlorococcus</taxon>
    </lineage>
</organism>
<dbReference type="EC" id="2.1.1.-" evidence="1"/>
<dbReference type="EMBL" id="CP000576">
    <property type="protein sequence ID" value="ABO18288.1"/>
    <property type="molecule type" value="Genomic_DNA"/>
</dbReference>
<dbReference type="RefSeq" id="WP_011863585.1">
    <property type="nucleotide sequence ID" value="NC_009091.1"/>
</dbReference>
<dbReference type="SMR" id="A3PEW3"/>
<dbReference type="STRING" id="167546.P9301_16651"/>
<dbReference type="KEGG" id="pmg:P9301_16651"/>
<dbReference type="eggNOG" id="COG0357">
    <property type="taxonomic scope" value="Bacteria"/>
</dbReference>
<dbReference type="HOGENOM" id="CLU_065341_0_2_3"/>
<dbReference type="OrthoDB" id="9808773at2"/>
<dbReference type="Proteomes" id="UP000001430">
    <property type="component" value="Chromosome"/>
</dbReference>
<dbReference type="GO" id="GO:0005829">
    <property type="term" value="C:cytosol"/>
    <property type="evidence" value="ECO:0007669"/>
    <property type="project" value="TreeGrafter"/>
</dbReference>
<dbReference type="GO" id="GO:0070043">
    <property type="term" value="F:rRNA (guanine-N7-)-methyltransferase activity"/>
    <property type="evidence" value="ECO:0007669"/>
    <property type="project" value="UniProtKB-UniRule"/>
</dbReference>
<dbReference type="Gene3D" id="3.40.50.150">
    <property type="entry name" value="Vaccinia Virus protein VP39"/>
    <property type="match status" value="1"/>
</dbReference>
<dbReference type="HAMAP" id="MF_00074">
    <property type="entry name" value="16SrRNA_methyltr_G"/>
    <property type="match status" value="1"/>
</dbReference>
<dbReference type="InterPro" id="IPR003682">
    <property type="entry name" value="rRNA_ssu_MeTfrase_G"/>
</dbReference>
<dbReference type="InterPro" id="IPR029063">
    <property type="entry name" value="SAM-dependent_MTases_sf"/>
</dbReference>
<dbReference type="NCBIfam" id="TIGR00138">
    <property type="entry name" value="rsmG_gidB"/>
    <property type="match status" value="1"/>
</dbReference>
<dbReference type="PANTHER" id="PTHR31760">
    <property type="entry name" value="S-ADENOSYL-L-METHIONINE-DEPENDENT METHYLTRANSFERASES SUPERFAMILY PROTEIN"/>
    <property type="match status" value="1"/>
</dbReference>
<dbReference type="PANTHER" id="PTHR31760:SF0">
    <property type="entry name" value="S-ADENOSYL-L-METHIONINE-DEPENDENT METHYLTRANSFERASES SUPERFAMILY PROTEIN"/>
    <property type="match status" value="1"/>
</dbReference>
<dbReference type="Pfam" id="PF02527">
    <property type="entry name" value="GidB"/>
    <property type="match status" value="1"/>
</dbReference>
<dbReference type="PIRSF" id="PIRSF003078">
    <property type="entry name" value="GidB"/>
    <property type="match status" value="1"/>
</dbReference>
<dbReference type="SUPFAM" id="SSF53335">
    <property type="entry name" value="S-adenosyl-L-methionine-dependent methyltransferases"/>
    <property type="match status" value="1"/>
</dbReference>
<name>RSMG_PROM0</name>
<reference key="1">
    <citation type="journal article" date="2007" name="PLoS Genet.">
        <title>Patterns and implications of gene gain and loss in the evolution of Prochlorococcus.</title>
        <authorList>
            <person name="Kettler G.C."/>
            <person name="Martiny A.C."/>
            <person name="Huang K."/>
            <person name="Zucker J."/>
            <person name="Coleman M.L."/>
            <person name="Rodrigue S."/>
            <person name="Chen F."/>
            <person name="Lapidus A."/>
            <person name="Ferriera S."/>
            <person name="Johnson J."/>
            <person name="Steglich C."/>
            <person name="Church G.M."/>
            <person name="Richardson P."/>
            <person name="Chisholm S.W."/>
        </authorList>
    </citation>
    <scope>NUCLEOTIDE SEQUENCE [LARGE SCALE GENOMIC DNA]</scope>
    <source>
        <strain>MIT 9301</strain>
    </source>
</reference>
<keyword id="KW-0963">Cytoplasm</keyword>
<keyword id="KW-0489">Methyltransferase</keyword>
<keyword id="KW-1185">Reference proteome</keyword>
<keyword id="KW-0698">rRNA processing</keyword>
<keyword id="KW-0949">S-adenosyl-L-methionine</keyword>
<keyword id="KW-0808">Transferase</keyword>
<sequence length="237" mass="27351">MKKQNIPEEILSLLTEEEINMFQELQIKIKELNNKTNITRLTDGDDYWVSQVFDSIWPFKAFTNINFDNKKFLDIGSGCGFPGLAYAITHPNSEIYLIDSLKKKTDAIKILVEKINFKNNIHVINDRIENLAHHSSMRNNFNIATTRAVSNPSTVSEYILPMLKKEGFGVLYCGKWTNEESKNLDKTLEILEGKVKDKKEILLPRNKGTRNIILIQQKRLCPEIYPRKVGKPEKNPL</sequence>
<accession>A3PEW3</accession>